<comment type="function">
    <text evidence="6">Catalyzes the oxidation of Mn(2+) to Mn(3+). The latter, acting as a diffusible redox mediator, is capable of oxidizing a variety of lignin compounds.</text>
</comment>
<comment type="catalytic activity">
    <reaction>
        <text>2 Mn(2+) + H2O2 + 2 H(+) = 2 Mn(3+) + 2 H2O</text>
        <dbReference type="Rhea" id="RHEA:22776"/>
        <dbReference type="ChEBI" id="CHEBI:15377"/>
        <dbReference type="ChEBI" id="CHEBI:15378"/>
        <dbReference type="ChEBI" id="CHEBI:16240"/>
        <dbReference type="ChEBI" id="CHEBI:29035"/>
        <dbReference type="ChEBI" id="CHEBI:29041"/>
        <dbReference type="EC" id="1.11.1.13"/>
    </reaction>
</comment>
<comment type="cofactor">
    <cofactor evidence="3">
        <name>heme b</name>
        <dbReference type="ChEBI" id="CHEBI:60344"/>
    </cofactor>
    <text evidence="3">Binds 1 heme b (iron(II)-protoporphyrin IX) group per subunit.</text>
</comment>
<comment type="cofactor">
    <cofactor evidence="3">
        <name>Ca(2+)</name>
        <dbReference type="ChEBI" id="CHEBI:29108"/>
    </cofactor>
    <text evidence="3">Binds 2 calcium ions per subunit.</text>
</comment>
<comment type="subcellular location">
    <subcellularLocation>
        <location>Secreted</location>
    </subcellularLocation>
</comment>
<comment type="induction">
    <text evidence="6">By a combination of high manganese and malonate levels.</text>
</comment>
<comment type="similarity">
    <text evidence="7">Belongs to the peroxidase family. Ligninase subfamily.</text>
</comment>
<accession>Q70LM3</accession>
<accession>Q96TS5</accession>
<name>PEM2_PHLRA</name>
<keyword id="KW-0106">Calcium</keyword>
<keyword id="KW-0903">Direct protein sequencing</keyword>
<keyword id="KW-1015">Disulfide bond</keyword>
<keyword id="KW-0325">Glycoprotein</keyword>
<keyword id="KW-0349">Heme</keyword>
<keyword id="KW-0376">Hydrogen peroxide</keyword>
<keyword id="KW-0408">Iron</keyword>
<keyword id="KW-0439">Lignin degradation</keyword>
<keyword id="KW-0464">Manganese</keyword>
<keyword id="KW-0479">Metal-binding</keyword>
<keyword id="KW-0560">Oxidoreductase</keyword>
<keyword id="KW-0575">Peroxidase</keyword>
<keyword id="KW-0964">Secreted</keyword>
<keyword id="KW-0732">Signal</keyword>
<proteinExistence type="evidence at protein level"/>
<protein>
    <recommendedName>
        <fullName>Manganese peroxidase 2</fullName>
        <shortName>MnP2</shortName>
        <ecNumber>1.11.1.13</ecNumber>
    </recommendedName>
    <alternativeName>
        <fullName>Manganese peroxidase isozyme 2</fullName>
    </alternativeName>
</protein>
<feature type="signal peptide" evidence="5">
    <location>
        <begin position="1"/>
        <end position="23"/>
    </location>
</feature>
<feature type="chain" id="PRO_5000071417" description="Manganese peroxidase 2">
    <location>
        <begin position="24"/>
        <end position="390"/>
    </location>
</feature>
<feature type="active site" description="Proton acceptor" evidence="3 4">
    <location>
        <position position="70"/>
    </location>
</feature>
<feature type="binding site" evidence="1">
    <location>
        <position position="59"/>
    </location>
    <ligand>
        <name>Mn(2+)</name>
        <dbReference type="ChEBI" id="CHEBI:29035"/>
    </ligand>
</feature>
<feature type="binding site" evidence="1">
    <location>
        <position position="63"/>
    </location>
    <ligand>
        <name>Mn(2+)</name>
        <dbReference type="ChEBI" id="CHEBI:29035"/>
    </ligand>
</feature>
<feature type="binding site" evidence="3">
    <location>
        <position position="71"/>
    </location>
    <ligand>
        <name>Ca(2+)</name>
        <dbReference type="ChEBI" id="CHEBI:29108"/>
        <label>1</label>
    </ligand>
</feature>
<feature type="binding site" evidence="3">
    <location>
        <position position="86"/>
    </location>
    <ligand>
        <name>Ca(2+)</name>
        <dbReference type="ChEBI" id="CHEBI:29108"/>
        <label>1</label>
    </ligand>
</feature>
<feature type="binding site" evidence="3">
    <location>
        <position position="88"/>
    </location>
    <ligand>
        <name>Ca(2+)</name>
        <dbReference type="ChEBI" id="CHEBI:29108"/>
        <label>1</label>
    </ligand>
</feature>
<feature type="binding site" evidence="3">
    <location>
        <position position="90"/>
    </location>
    <ligand>
        <name>Ca(2+)</name>
        <dbReference type="ChEBI" id="CHEBI:29108"/>
        <label>1</label>
    </ligand>
</feature>
<feature type="binding site" description="axial binding residue" evidence="3">
    <location>
        <position position="197"/>
    </location>
    <ligand>
        <name>heme b</name>
        <dbReference type="ChEBI" id="CHEBI:60344"/>
    </ligand>
    <ligandPart>
        <name>Fe</name>
        <dbReference type="ChEBI" id="CHEBI:18248"/>
    </ligandPart>
</feature>
<feature type="binding site" evidence="3">
    <location>
        <position position="198"/>
    </location>
    <ligand>
        <name>Ca(2+)</name>
        <dbReference type="ChEBI" id="CHEBI:29108"/>
        <label>2</label>
    </ligand>
</feature>
<feature type="binding site" evidence="1">
    <location>
        <position position="203"/>
    </location>
    <ligand>
        <name>Mn(2+)</name>
        <dbReference type="ChEBI" id="CHEBI:29035"/>
    </ligand>
</feature>
<feature type="binding site" evidence="3">
    <location>
        <position position="215"/>
    </location>
    <ligand>
        <name>Ca(2+)</name>
        <dbReference type="ChEBI" id="CHEBI:29108"/>
        <label>2</label>
    </ligand>
</feature>
<feature type="binding site" evidence="3">
    <location>
        <position position="217"/>
    </location>
    <ligand>
        <name>Ca(2+)</name>
        <dbReference type="ChEBI" id="CHEBI:29108"/>
        <label>2</label>
    </ligand>
</feature>
<feature type="binding site" evidence="3">
    <location>
        <position position="222"/>
    </location>
    <ligand>
        <name>Ca(2+)</name>
        <dbReference type="ChEBI" id="CHEBI:29108"/>
        <label>2</label>
    </ligand>
</feature>
<feature type="site" description="Transition state stabilizer" evidence="3">
    <location>
        <position position="66"/>
    </location>
</feature>
<feature type="glycosylation site" description="N-linked (GlcNAc...) asparagine" evidence="2">
    <location>
        <position position="155"/>
    </location>
</feature>
<feature type="glycosylation site" description="N-linked (GlcNAc...) asparagine" evidence="2">
    <location>
        <position position="241"/>
    </location>
</feature>
<feature type="disulfide bond" evidence="3">
    <location>
        <begin position="27"/>
        <end position="39"/>
    </location>
</feature>
<feature type="disulfide bond" evidence="3">
    <location>
        <begin position="38"/>
        <end position="313"/>
    </location>
</feature>
<feature type="disulfide bond" evidence="3">
    <location>
        <begin position="57"/>
        <end position="141"/>
    </location>
</feature>
<feature type="disulfide bond" evidence="3">
    <location>
        <begin position="277"/>
        <end position="343"/>
    </location>
</feature>
<feature type="disulfide bond" evidence="3">
    <location>
        <begin position="365"/>
        <end position="372"/>
    </location>
</feature>
<feature type="sequence conflict" description="In Ref. 1; CAC85963." evidence="7" ref="1">
    <original>Q</original>
    <variation>H</variation>
    <location>
        <position position="131"/>
    </location>
</feature>
<feature type="sequence conflict" description="In Ref. 1; CAC85963." evidence="7" ref="1">
    <original>I</original>
    <variation>V</variation>
    <location>
        <position position="225"/>
    </location>
</feature>
<reference key="1">
    <citation type="journal article" date="2005" name="Fungal Genet. Biol.">
        <title>The two manganese peroxidases Pr-MnP2 and Pr-MnP3 of Phlebia radiata, a lignin-degrading basidiomycete, are phylogenetically and structurally divergent.</title>
        <authorList>
            <person name="Hilden K."/>
            <person name="Martinez A.T."/>
            <person name="Hatakka A."/>
            <person name="Lundell T."/>
        </authorList>
    </citation>
    <scope>NUCLEOTIDE SEQUENCE [GENOMIC DNA / MRNA]</scope>
    <scope>PROTEIN SEQUENCE OF N-TERMINUS</scope>
    <source>
        <strain>ATCC 64658 / 79</strain>
    </source>
</reference>
<reference key="2">
    <citation type="journal article" date="1996" name="Appl. Microbiol. Biotechnol.">
        <title>Manganese and malonate are individual regulators for the production of lignin and manganese peroxidase isozymes and in the degradation of lignin by Phlebia radiata.</title>
        <authorList>
            <person name="Moilanen A.-M."/>
            <person name="Lundell T."/>
            <person name="Vares T."/>
            <person name="Hatakka A."/>
        </authorList>
    </citation>
    <scope>FUNCTION</scope>
    <scope>INDUCTION</scope>
</reference>
<sequence length="390" mass="40326">MAFNFAAILAFVSLAAVTSAAPSKTTCSNGVVVPDAVCCDFVPLASALQSEVLMGDCGEDAHELVRLIFHDAIAISQSMGPSAGGGADGSMLIFPTVEPAFFPNLGIADSVNNLIPFLSQFPTISAGDLVQFAGAVAISNCPGAPQLEFLAGRPNATAPAIDGLIPEPQDDVTKILARFKDAGNFSPAEVVALLASHSIARADHVDPTLDAAPFDSTPFDFDTQIFLEVLLKGVGFPGLANNTGEVSSPLPVTDGTDVGELRLQSDFALARDERTACAWQSFVNEQEAMATAFKNAVKKLAVLGHNRNDLVDCSAVVPVPKPATGTPATFPASTGPQDLELTCTTEPFPTLSTAPGAQQTLIPHCSDGTMTCNSVQFDGPATNFGGADDS</sequence>
<gene>
    <name type="primary">mnp2</name>
</gene>
<evidence type="ECO:0000250" key="1"/>
<evidence type="ECO:0000255" key="2"/>
<evidence type="ECO:0000255" key="3">
    <source>
        <dbReference type="PROSITE-ProRule" id="PRU00297"/>
    </source>
</evidence>
<evidence type="ECO:0000255" key="4">
    <source>
        <dbReference type="PROSITE-ProRule" id="PRU10012"/>
    </source>
</evidence>
<evidence type="ECO:0000269" key="5">
    <source>
    </source>
</evidence>
<evidence type="ECO:0000269" key="6">
    <source ref="2"/>
</evidence>
<evidence type="ECO:0000305" key="7"/>
<dbReference type="EC" id="1.11.1.13"/>
<dbReference type="EMBL" id="AJ315701">
    <property type="protein sequence ID" value="CAC85963.1"/>
    <property type="molecule type" value="mRNA"/>
</dbReference>
<dbReference type="EMBL" id="AJ566199">
    <property type="protein sequence ID" value="CAD92854.1"/>
    <property type="molecule type" value="Genomic_DNA"/>
</dbReference>
<dbReference type="SMR" id="Q70LM3"/>
<dbReference type="CAZy" id="AA2">
    <property type="family name" value="Auxiliary Activities 2"/>
</dbReference>
<dbReference type="PeroxiBase" id="2296">
    <property type="entry name" value="PrMnP02"/>
</dbReference>
<dbReference type="GlyCosmos" id="Q70LM3">
    <property type="glycosylation" value="2 sites, No reported glycans"/>
</dbReference>
<dbReference type="KEGG" id="ag:CAC85963"/>
<dbReference type="GO" id="GO:0005576">
    <property type="term" value="C:extracellular region"/>
    <property type="evidence" value="ECO:0007669"/>
    <property type="project" value="UniProtKB-SubCell"/>
</dbReference>
<dbReference type="GO" id="GO:0020037">
    <property type="term" value="F:heme binding"/>
    <property type="evidence" value="ECO:0007669"/>
    <property type="project" value="InterPro"/>
</dbReference>
<dbReference type="GO" id="GO:0016689">
    <property type="term" value="F:manganese peroxidase activity"/>
    <property type="evidence" value="ECO:0007669"/>
    <property type="project" value="UniProtKB-EC"/>
</dbReference>
<dbReference type="GO" id="GO:0046872">
    <property type="term" value="F:metal ion binding"/>
    <property type="evidence" value="ECO:0007669"/>
    <property type="project" value="UniProtKB-KW"/>
</dbReference>
<dbReference type="GO" id="GO:0034599">
    <property type="term" value="P:cellular response to oxidative stress"/>
    <property type="evidence" value="ECO:0007669"/>
    <property type="project" value="InterPro"/>
</dbReference>
<dbReference type="GO" id="GO:0042744">
    <property type="term" value="P:hydrogen peroxide catabolic process"/>
    <property type="evidence" value="ECO:0007669"/>
    <property type="project" value="UniProtKB-KW"/>
</dbReference>
<dbReference type="GO" id="GO:0046274">
    <property type="term" value="P:lignin catabolic process"/>
    <property type="evidence" value="ECO:0007669"/>
    <property type="project" value="UniProtKB-KW"/>
</dbReference>
<dbReference type="GO" id="GO:0000302">
    <property type="term" value="P:response to reactive oxygen species"/>
    <property type="evidence" value="ECO:0007669"/>
    <property type="project" value="TreeGrafter"/>
</dbReference>
<dbReference type="CDD" id="cd00692">
    <property type="entry name" value="ligninase"/>
    <property type="match status" value="1"/>
</dbReference>
<dbReference type="Gene3D" id="1.10.520.10">
    <property type="match status" value="1"/>
</dbReference>
<dbReference type="Gene3D" id="1.10.420.10">
    <property type="entry name" value="Peroxidase, domain 2"/>
    <property type="match status" value="1"/>
</dbReference>
<dbReference type="InterPro" id="IPR044831">
    <property type="entry name" value="Ccp1-like"/>
</dbReference>
<dbReference type="InterPro" id="IPR002016">
    <property type="entry name" value="Haem_peroxidase"/>
</dbReference>
<dbReference type="InterPro" id="IPR010255">
    <property type="entry name" value="Haem_peroxidase_sf"/>
</dbReference>
<dbReference type="InterPro" id="IPR001621">
    <property type="entry name" value="Ligninase"/>
</dbReference>
<dbReference type="InterPro" id="IPR024589">
    <property type="entry name" value="Ligninase_C"/>
</dbReference>
<dbReference type="InterPro" id="IPR019794">
    <property type="entry name" value="Peroxidases_AS"/>
</dbReference>
<dbReference type="InterPro" id="IPR019793">
    <property type="entry name" value="Peroxidases_heam-ligand_BS"/>
</dbReference>
<dbReference type="PANTHER" id="PTHR31356:SF66">
    <property type="entry name" value="CATALASE-PEROXIDASE"/>
    <property type="match status" value="1"/>
</dbReference>
<dbReference type="PANTHER" id="PTHR31356">
    <property type="entry name" value="THYLAKOID LUMENAL 29 KDA PROTEIN, CHLOROPLASTIC-RELATED"/>
    <property type="match status" value="1"/>
</dbReference>
<dbReference type="Pfam" id="PF00141">
    <property type="entry name" value="peroxidase"/>
    <property type="match status" value="1"/>
</dbReference>
<dbReference type="Pfam" id="PF11895">
    <property type="entry name" value="Peroxidase_ext"/>
    <property type="match status" value="1"/>
</dbReference>
<dbReference type="PRINTS" id="PR00462">
    <property type="entry name" value="LIGNINASE"/>
</dbReference>
<dbReference type="PRINTS" id="PR00458">
    <property type="entry name" value="PEROXIDASE"/>
</dbReference>
<dbReference type="SUPFAM" id="SSF48113">
    <property type="entry name" value="Heme-dependent peroxidases"/>
    <property type="match status" value="1"/>
</dbReference>
<dbReference type="PROSITE" id="PS00435">
    <property type="entry name" value="PEROXIDASE_1"/>
    <property type="match status" value="1"/>
</dbReference>
<dbReference type="PROSITE" id="PS00436">
    <property type="entry name" value="PEROXIDASE_2"/>
    <property type="match status" value="1"/>
</dbReference>
<dbReference type="PROSITE" id="PS50873">
    <property type="entry name" value="PEROXIDASE_4"/>
    <property type="match status" value="1"/>
</dbReference>
<organism>
    <name type="scientific">Phlebia radiata</name>
    <name type="common">White-rot fungus</name>
    <dbReference type="NCBI Taxonomy" id="5308"/>
    <lineage>
        <taxon>Eukaryota</taxon>
        <taxon>Fungi</taxon>
        <taxon>Dikarya</taxon>
        <taxon>Basidiomycota</taxon>
        <taxon>Agaricomycotina</taxon>
        <taxon>Agaricomycetes</taxon>
        <taxon>Polyporales</taxon>
        <taxon>Meruliaceae</taxon>
        <taxon>Phlebia</taxon>
    </lineage>
</organism>